<proteinExistence type="evidence at transcript level"/>
<comment type="function">
    <text evidence="3">May act as a soluble regulator of keratinocyte differentiation.</text>
</comment>
<comment type="subunit">
    <text evidence="1">Homooligomer. Seems to be able to homodimerize and homotrimerize (By similarity).</text>
</comment>
<comment type="subcellular location">
    <subcellularLocation>
        <location evidence="1">Secreted</location>
    </subcellularLocation>
</comment>
<comment type="PTM">
    <text evidence="1">O-glycosylated.</text>
</comment>
<comment type="similarity">
    <text evidence="3">Belongs to the dermokine family.</text>
</comment>
<keyword id="KW-0325">Glycoprotein</keyword>
<keyword id="KW-1185">Reference proteome</keyword>
<keyword id="KW-0964">Secreted</keyword>
<keyword id="KW-0732">Signal</keyword>
<gene>
    <name type="primary">DMKN</name>
</gene>
<protein>
    <recommendedName>
        <fullName>Dermokine</fullName>
    </recommendedName>
</protein>
<dbReference type="EMBL" id="BC133532">
    <property type="protein sequence ID" value="AAI33533.1"/>
    <property type="molecule type" value="mRNA"/>
</dbReference>
<dbReference type="RefSeq" id="NP_001075932.1">
    <property type="nucleotide sequence ID" value="NM_001082463.1"/>
</dbReference>
<dbReference type="FunCoup" id="A2VE23">
    <property type="interactions" value="16"/>
</dbReference>
<dbReference type="STRING" id="9913.ENSBTAP00000068124"/>
<dbReference type="PaxDb" id="9913-ENSBTAP00000021161"/>
<dbReference type="PeptideAtlas" id="A2VE23"/>
<dbReference type="Ensembl" id="ENSBTAT00000021161.6">
    <property type="protein sequence ID" value="ENSBTAP00000021161.6"/>
    <property type="gene ID" value="ENSBTAG00000015912.7"/>
</dbReference>
<dbReference type="GeneID" id="618159"/>
<dbReference type="KEGG" id="bta:618159"/>
<dbReference type="CTD" id="93099"/>
<dbReference type="VEuPathDB" id="HostDB:ENSBTAG00000015912"/>
<dbReference type="VGNC" id="VGNC:28107">
    <property type="gene designation" value="DMKN"/>
</dbReference>
<dbReference type="eggNOG" id="ENOG502QQ65">
    <property type="taxonomic scope" value="Eukaryota"/>
</dbReference>
<dbReference type="GeneTree" id="ENSGT00570000079107"/>
<dbReference type="HOGENOM" id="CLU_045546_1_0_1"/>
<dbReference type="InParanoid" id="A2VE23"/>
<dbReference type="OrthoDB" id="9845972at2759"/>
<dbReference type="Proteomes" id="UP000009136">
    <property type="component" value="Chromosome 18"/>
</dbReference>
<dbReference type="Bgee" id="ENSBTAG00000015912">
    <property type="expression patterns" value="Expressed in zone of skin and 40 other cell types or tissues"/>
</dbReference>
<dbReference type="GO" id="GO:0005615">
    <property type="term" value="C:extracellular space"/>
    <property type="evidence" value="ECO:0000318"/>
    <property type="project" value="GO_Central"/>
</dbReference>
<dbReference type="GO" id="GO:1903575">
    <property type="term" value="P:cornified envelope assembly"/>
    <property type="evidence" value="ECO:0000318"/>
    <property type="project" value="GO_Central"/>
</dbReference>
<dbReference type="CDD" id="cd21118">
    <property type="entry name" value="dermokine"/>
    <property type="match status" value="1"/>
</dbReference>
<dbReference type="InterPro" id="IPR033541">
    <property type="entry name" value="Dermokine"/>
</dbReference>
<dbReference type="PANTHER" id="PTHR36881">
    <property type="entry name" value="DERMOKINE"/>
    <property type="match status" value="1"/>
</dbReference>
<dbReference type="PANTHER" id="PTHR36881:SF1">
    <property type="entry name" value="DERMOKINE"/>
    <property type="match status" value="1"/>
</dbReference>
<reference key="1">
    <citation type="submission" date="2007-02" db="EMBL/GenBank/DDBJ databases">
        <authorList>
            <consortium name="NIH - Mammalian Gene Collection (MGC) project"/>
        </authorList>
    </citation>
    <scope>NUCLEOTIDE SEQUENCE [LARGE SCALE MRNA]</scope>
    <source>
        <strain>Hereford</strain>
        <tissue>Fetal skin</tissue>
    </source>
</reference>
<accession>A2VE23</accession>
<name>DMKN_BOVIN</name>
<sequence length="510" mass="50549">MKLKGSLACLLLFLLLGSGEASPLQSGEENTREEVGEAIGHGVGEALGDVLGEAAIHGIEKAIGQGTGKTEGLGIREARDPHLGDALAHKLKEASHALKNTGSEADRQAENIIGHGVDPAHKSWQGTPGSNGAWGTNGQPPSGGHGIPGSQGSSGGPGDTQDQVFSGGSGGSFGANAQGGSWGQGGHRGAFNLGANSQGTSPQPGSVRSNNNRNTECTTPPGSGGSSGNSGGSSSSGSSTNGGGSSGGSNGGSNGSTSSNSGSSNGGGSSNSGGSNGGGSNGGGSSNGGGSNAGSSGSSGSSSDTRNSDHGGSSQGYNPSPSSGSRVGSGVRNKPECDNPHVSGGSGGQGQGSSGEGEAVSGINTLNSQTSSESFNFDTFWKNFKSKLGFINWDALNKGQAPPPSTRALLYFRRLWEDFKHNTPFLNWKVITEGEDLPSLQKRAGGAGQPGTGWQDAVAGTAKNYNYNQQGPPAALGGQYPAKTPAKGGVTVSSSASRTYPGLLQWVKFW</sequence>
<organism>
    <name type="scientific">Bos taurus</name>
    <name type="common">Bovine</name>
    <dbReference type="NCBI Taxonomy" id="9913"/>
    <lineage>
        <taxon>Eukaryota</taxon>
        <taxon>Metazoa</taxon>
        <taxon>Chordata</taxon>
        <taxon>Craniata</taxon>
        <taxon>Vertebrata</taxon>
        <taxon>Euteleostomi</taxon>
        <taxon>Mammalia</taxon>
        <taxon>Eutheria</taxon>
        <taxon>Laurasiatheria</taxon>
        <taxon>Artiodactyla</taxon>
        <taxon>Ruminantia</taxon>
        <taxon>Pecora</taxon>
        <taxon>Bovidae</taxon>
        <taxon>Bovinae</taxon>
        <taxon>Bos</taxon>
    </lineage>
</organism>
<feature type="signal peptide" evidence="1">
    <location>
        <begin position="1"/>
        <end position="21"/>
    </location>
</feature>
<feature type="chain" id="PRO_0000330763" description="Dermokine">
    <location>
        <begin position="22"/>
        <end position="510"/>
    </location>
</feature>
<feature type="region of interest" description="Disordered" evidence="2">
    <location>
        <begin position="117"/>
        <end position="362"/>
    </location>
</feature>
<feature type="compositionally biased region" description="Polar residues" evidence="2">
    <location>
        <begin position="124"/>
        <end position="137"/>
    </location>
</feature>
<feature type="compositionally biased region" description="Gly residues" evidence="2">
    <location>
        <begin position="141"/>
        <end position="158"/>
    </location>
</feature>
<feature type="compositionally biased region" description="Polar residues" evidence="2">
    <location>
        <begin position="194"/>
        <end position="221"/>
    </location>
</feature>
<feature type="compositionally biased region" description="Gly residues" evidence="2">
    <location>
        <begin position="222"/>
        <end position="231"/>
    </location>
</feature>
<feature type="compositionally biased region" description="Gly residues" evidence="2">
    <location>
        <begin position="240"/>
        <end position="254"/>
    </location>
</feature>
<feature type="compositionally biased region" description="Gly residues" evidence="2">
    <location>
        <begin position="264"/>
        <end position="292"/>
    </location>
</feature>
<feature type="compositionally biased region" description="Low complexity" evidence="2">
    <location>
        <begin position="293"/>
        <end position="303"/>
    </location>
</feature>
<feature type="compositionally biased region" description="Low complexity" evidence="2">
    <location>
        <begin position="319"/>
        <end position="332"/>
    </location>
</feature>
<feature type="compositionally biased region" description="Gly residues" evidence="2">
    <location>
        <begin position="344"/>
        <end position="355"/>
    </location>
</feature>
<evidence type="ECO:0000250" key="1"/>
<evidence type="ECO:0000256" key="2">
    <source>
        <dbReference type="SAM" id="MobiDB-lite"/>
    </source>
</evidence>
<evidence type="ECO:0000305" key="3"/>